<evidence type="ECO:0000255" key="1">
    <source>
        <dbReference type="HAMAP-Rule" id="MF_00012"/>
    </source>
</evidence>
<comment type="function">
    <text evidence="1">Functions in the biosynthesis of branched-chain amino acids. Catalyzes the dehydration of (2R,3R)-2,3-dihydroxy-3-methylpentanoate (2,3-dihydroxy-3-methylvalerate) into 2-oxo-3-methylpentanoate (2-oxo-3-methylvalerate) and of (2R)-2,3-dihydroxy-3-methylbutanoate (2,3-dihydroxyisovalerate) into 2-oxo-3-methylbutanoate (2-oxoisovalerate), the penultimate precursor to L-isoleucine and L-valine, respectively.</text>
</comment>
<comment type="catalytic activity">
    <reaction evidence="1">
        <text>(2R)-2,3-dihydroxy-3-methylbutanoate = 3-methyl-2-oxobutanoate + H2O</text>
        <dbReference type="Rhea" id="RHEA:24809"/>
        <dbReference type="ChEBI" id="CHEBI:11851"/>
        <dbReference type="ChEBI" id="CHEBI:15377"/>
        <dbReference type="ChEBI" id="CHEBI:49072"/>
        <dbReference type="EC" id="4.2.1.9"/>
    </reaction>
    <physiologicalReaction direction="left-to-right" evidence="1">
        <dbReference type="Rhea" id="RHEA:24810"/>
    </physiologicalReaction>
</comment>
<comment type="catalytic activity">
    <reaction evidence="1">
        <text>(2R,3R)-2,3-dihydroxy-3-methylpentanoate = (S)-3-methyl-2-oxopentanoate + H2O</text>
        <dbReference type="Rhea" id="RHEA:27694"/>
        <dbReference type="ChEBI" id="CHEBI:15377"/>
        <dbReference type="ChEBI" id="CHEBI:35146"/>
        <dbReference type="ChEBI" id="CHEBI:49258"/>
        <dbReference type="EC" id="4.2.1.9"/>
    </reaction>
    <physiologicalReaction direction="left-to-right" evidence="1">
        <dbReference type="Rhea" id="RHEA:27695"/>
    </physiologicalReaction>
</comment>
<comment type="cofactor">
    <cofactor evidence="1">
        <name>[2Fe-2S] cluster</name>
        <dbReference type="ChEBI" id="CHEBI:190135"/>
    </cofactor>
    <text evidence="1">Binds 1 [2Fe-2S] cluster per subunit. This cluster acts as a Lewis acid cofactor.</text>
</comment>
<comment type="cofactor">
    <cofactor evidence="1">
        <name>Mg(2+)</name>
        <dbReference type="ChEBI" id="CHEBI:18420"/>
    </cofactor>
</comment>
<comment type="pathway">
    <text evidence="1">Amino-acid biosynthesis; L-isoleucine biosynthesis; L-isoleucine from 2-oxobutanoate: step 3/4.</text>
</comment>
<comment type="pathway">
    <text evidence="1">Amino-acid biosynthesis; L-valine biosynthesis; L-valine from pyruvate: step 3/4.</text>
</comment>
<comment type="subunit">
    <text evidence="1">Homodimer.</text>
</comment>
<comment type="similarity">
    <text evidence="1">Belongs to the IlvD/Edd family.</text>
</comment>
<proteinExistence type="inferred from homology"/>
<sequence>MPAYRSRTTTHGRNMAGARGLWRATGVKNSDFGKPIIAIVNSFTQFVPGHVHLKDLGQMVAREVEAAGGIAKEFNTIAVDDGIAMGHDGMLYSLPSRELIADSVEYMVNAHCADAMVCISNCDKITPGMLMAAMRLNIPAIFVSGGPMEAGKVTLGDGRKVSLDLVDAMVAAADDKISDADLAAIEEAACPTCGSCSGMFTANSMNCLSEALGLSLPGNGSTLATHAFRKNLFLEAGRRIVEVTRRHYEQDDASVLPRAIASKAAFLNAMSLDIAMGGSTNTVLHLLAIAQEGGVDFTMDDIDALSRKVPCLCKVAPNTANVHMEDVHRAGGIMAILGELDRAGLIDRDCPTVHAPTIGAAIDQWDIARSNDPQARELFLAAPGGVPTQVAFSQATLWPDLDLDREHGVIRSAKAPFSKDGGLAVLKGNVALDGCIVKTAGVDESILVFSGRAKVYESQDAAVSGILTGKVEAGDVVVIRYEGPKGGPGMQEMLYPTSYLKSKGLGKACALITDGRFSGGTSGLSIGHVSPEAAAGGTIGLVRDGDRIEIDIPNRSIRLAVPEDELAARRAEQDAKGWKPAQPRQRQVSAALKVYAQFAASADKGAVRILPE</sequence>
<protein>
    <recommendedName>
        <fullName evidence="1">Dihydroxy-acid dehydratase</fullName>
        <shortName evidence="1">DAD</shortName>
        <ecNumber evidence="1">4.2.1.9</ecNumber>
    </recommendedName>
</protein>
<reference key="1">
    <citation type="submission" date="2006-12" db="EMBL/GenBank/DDBJ databases">
        <title>Complete sequence of chromosome 2 of Paracoccus denitrificans PD1222.</title>
        <authorList>
            <person name="Copeland A."/>
            <person name="Lucas S."/>
            <person name="Lapidus A."/>
            <person name="Barry K."/>
            <person name="Detter J.C."/>
            <person name="Glavina del Rio T."/>
            <person name="Hammon N."/>
            <person name="Israni S."/>
            <person name="Dalin E."/>
            <person name="Tice H."/>
            <person name="Pitluck S."/>
            <person name="Munk A.C."/>
            <person name="Brettin T."/>
            <person name="Bruce D."/>
            <person name="Han C."/>
            <person name="Tapia R."/>
            <person name="Gilna P."/>
            <person name="Schmutz J."/>
            <person name="Larimer F."/>
            <person name="Land M."/>
            <person name="Hauser L."/>
            <person name="Kyrpides N."/>
            <person name="Lykidis A."/>
            <person name="Spiro S."/>
            <person name="Richardson D.J."/>
            <person name="Moir J.W.B."/>
            <person name="Ferguson S.J."/>
            <person name="van Spanning R.J.M."/>
            <person name="Richardson P."/>
        </authorList>
    </citation>
    <scope>NUCLEOTIDE SEQUENCE [LARGE SCALE GENOMIC DNA]</scope>
    <source>
        <strain>Pd 1222</strain>
    </source>
</reference>
<name>ILVD_PARDP</name>
<feature type="chain" id="PRO_1000001024" description="Dihydroxy-acid dehydratase">
    <location>
        <begin position="1"/>
        <end position="612"/>
    </location>
</feature>
<feature type="active site" description="Proton acceptor" evidence="1">
    <location>
        <position position="518"/>
    </location>
</feature>
<feature type="binding site" evidence="1">
    <location>
        <position position="81"/>
    </location>
    <ligand>
        <name>Mg(2+)</name>
        <dbReference type="ChEBI" id="CHEBI:18420"/>
    </ligand>
</feature>
<feature type="binding site" evidence="1">
    <location>
        <position position="122"/>
    </location>
    <ligand>
        <name>[2Fe-2S] cluster</name>
        <dbReference type="ChEBI" id="CHEBI:190135"/>
    </ligand>
</feature>
<feature type="binding site" evidence="1">
    <location>
        <position position="123"/>
    </location>
    <ligand>
        <name>Mg(2+)</name>
        <dbReference type="ChEBI" id="CHEBI:18420"/>
    </ligand>
</feature>
<feature type="binding site" description="via carbamate group" evidence="1">
    <location>
        <position position="124"/>
    </location>
    <ligand>
        <name>Mg(2+)</name>
        <dbReference type="ChEBI" id="CHEBI:18420"/>
    </ligand>
</feature>
<feature type="binding site" evidence="1">
    <location>
        <position position="196"/>
    </location>
    <ligand>
        <name>[2Fe-2S] cluster</name>
        <dbReference type="ChEBI" id="CHEBI:190135"/>
    </ligand>
</feature>
<feature type="binding site" evidence="1">
    <location>
        <position position="492"/>
    </location>
    <ligand>
        <name>Mg(2+)</name>
        <dbReference type="ChEBI" id="CHEBI:18420"/>
    </ligand>
</feature>
<feature type="modified residue" description="N6-carboxylysine" evidence="1">
    <location>
        <position position="124"/>
    </location>
</feature>
<accession>A1B673</accession>
<keyword id="KW-0001">2Fe-2S</keyword>
<keyword id="KW-0028">Amino-acid biosynthesis</keyword>
<keyword id="KW-0100">Branched-chain amino acid biosynthesis</keyword>
<keyword id="KW-0408">Iron</keyword>
<keyword id="KW-0411">Iron-sulfur</keyword>
<keyword id="KW-0456">Lyase</keyword>
<keyword id="KW-0460">Magnesium</keyword>
<keyword id="KW-0479">Metal-binding</keyword>
<keyword id="KW-1185">Reference proteome</keyword>
<dbReference type="EC" id="4.2.1.9" evidence="1"/>
<dbReference type="EMBL" id="CP000490">
    <property type="protein sequence ID" value="ABL71017.1"/>
    <property type="molecule type" value="Genomic_DNA"/>
</dbReference>
<dbReference type="RefSeq" id="WP_011749207.1">
    <property type="nucleotide sequence ID" value="NC_008687.1"/>
</dbReference>
<dbReference type="SMR" id="A1B673"/>
<dbReference type="STRING" id="318586.Pden_2933"/>
<dbReference type="EnsemblBacteria" id="ABL71017">
    <property type="protein sequence ID" value="ABL71017"/>
    <property type="gene ID" value="Pden_2933"/>
</dbReference>
<dbReference type="GeneID" id="93452614"/>
<dbReference type="KEGG" id="pde:Pden_2933"/>
<dbReference type="eggNOG" id="COG0129">
    <property type="taxonomic scope" value="Bacteria"/>
</dbReference>
<dbReference type="HOGENOM" id="CLU_014271_4_3_5"/>
<dbReference type="OrthoDB" id="9807077at2"/>
<dbReference type="UniPathway" id="UPA00047">
    <property type="reaction ID" value="UER00057"/>
</dbReference>
<dbReference type="UniPathway" id="UPA00049">
    <property type="reaction ID" value="UER00061"/>
</dbReference>
<dbReference type="Proteomes" id="UP000000361">
    <property type="component" value="Chromosome 2"/>
</dbReference>
<dbReference type="GO" id="GO:0005829">
    <property type="term" value="C:cytosol"/>
    <property type="evidence" value="ECO:0007669"/>
    <property type="project" value="TreeGrafter"/>
</dbReference>
<dbReference type="GO" id="GO:0051537">
    <property type="term" value="F:2 iron, 2 sulfur cluster binding"/>
    <property type="evidence" value="ECO:0007669"/>
    <property type="project" value="UniProtKB-UniRule"/>
</dbReference>
<dbReference type="GO" id="GO:0004160">
    <property type="term" value="F:dihydroxy-acid dehydratase activity"/>
    <property type="evidence" value="ECO:0007669"/>
    <property type="project" value="UniProtKB-UniRule"/>
</dbReference>
<dbReference type="GO" id="GO:0000287">
    <property type="term" value="F:magnesium ion binding"/>
    <property type="evidence" value="ECO:0007669"/>
    <property type="project" value="UniProtKB-UniRule"/>
</dbReference>
<dbReference type="GO" id="GO:0009097">
    <property type="term" value="P:isoleucine biosynthetic process"/>
    <property type="evidence" value="ECO:0007669"/>
    <property type="project" value="UniProtKB-UniRule"/>
</dbReference>
<dbReference type="GO" id="GO:0009099">
    <property type="term" value="P:L-valine biosynthetic process"/>
    <property type="evidence" value="ECO:0007669"/>
    <property type="project" value="UniProtKB-UniRule"/>
</dbReference>
<dbReference type="FunFam" id="3.50.30.80:FF:000001">
    <property type="entry name" value="Dihydroxy-acid dehydratase"/>
    <property type="match status" value="1"/>
</dbReference>
<dbReference type="Gene3D" id="3.50.30.80">
    <property type="entry name" value="IlvD/EDD C-terminal domain-like"/>
    <property type="match status" value="1"/>
</dbReference>
<dbReference type="HAMAP" id="MF_00012">
    <property type="entry name" value="IlvD"/>
    <property type="match status" value="1"/>
</dbReference>
<dbReference type="InterPro" id="IPR042096">
    <property type="entry name" value="Dihydro-acid_dehy_C"/>
</dbReference>
<dbReference type="InterPro" id="IPR004404">
    <property type="entry name" value="DihydroxyA_deHydtase"/>
</dbReference>
<dbReference type="InterPro" id="IPR020558">
    <property type="entry name" value="DiOHA_6PGluconate_deHydtase_CS"/>
</dbReference>
<dbReference type="InterPro" id="IPR056740">
    <property type="entry name" value="ILV_EDD_C"/>
</dbReference>
<dbReference type="InterPro" id="IPR000581">
    <property type="entry name" value="ILV_EDD_N"/>
</dbReference>
<dbReference type="InterPro" id="IPR037237">
    <property type="entry name" value="IlvD/EDD_N"/>
</dbReference>
<dbReference type="NCBIfam" id="TIGR00110">
    <property type="entry name" value="ilvD"/>
    <property type="match status" value="1"/>
</dbReference>
<dbReference type="NCBIfam" id="NF009103">
    <property type="entry name" value="PRK12448.1"/>
    <property type="match status" value="1"/>
</dbReference>
<dbReference type="PANTHER" id="PTHR43661">
    <property type="entry name" value="D-XYLONATE DEHYDRATASE"/>
    <property type="match status" value="1"/>
</dbReference>
<dbReference type="PANTHER" id="PTHR43661:SF3">
    <property type="entry name" value="D-XYLONATE DEHYDRATASE YAGF-RELATED"/>
    <property type="match status" value="1"/>
</dbReference>
<dbReference type="Pfam" id="PF24877">
    <property type="entry name" value="ILV_EDD_C"/>
    <property type="match status" value="1"/>
</dbReference>
<dbReference type="Pfam" id="PF00920">
    <property type="entry name" value="ILVD_EDD_N"/>
    <property type="match status" value="1"/>
</dbReference>
<dbReference type="SUPFAM" id="SSF143975">
    <property type="entry name" value="IlvD/EDD N-terminal domain-like"/>
    <property type="match status" value="1"/>
</dbReference>
<dbReference type="SUPFAM" id="SSF52016">
    <property type="entry name" value="LeuD/IlvD-like"/>
    <property type="match status" value="1"/>
</dbReference>
<dbReference type="PROSITE" id="PS00886">
    <property type="entry name" value="ILVD_EDD_1"/>
    <property type="match status" value="1"/>
</dbReference>
<dbReference type="PROSITE" id="PS00887">
    <property type="entry name" value="ILVD_EDD_2"/>
    <property type="match status" value="1"/>
</dbReference>
<gene>
    <name evidence="1" type="primary">ilvD</name>
    <name type="ordered locus">Pden_2933</name>
</gene>
<organism>
    <name type="scientific">Paracoccus denitrificans (strain Pd 1222)</name>
    <dbReference type="NCBI Taxonomy" id="318586"/>
    <lineage>
        <taxon>Bacteria</taxon>
        <taxon>Pseudomonadati</taxon>
        <taxon>Pseudomonadota</taxon>
        <taxon>Alphaproteobacteria</taxon>
        <taxon>Rhodobacterales</taxon>
        <taxon>Paracoccaceae</taxon>
        <taxon>Paracoccus</taxon>
    </lineage>
</organism>